<proteinExistence type="inferred from homology"/>
<comment type="function">
    <text evidence="1">DNA-dependent RNA polymerase catalyzes the transcription of DNA into RNA using the four ribonucleoside triphosphates as substrates.</text>
</comment>
<comment type="catalytic activity">
    <reaction evidence="1">
        <text>RNA(n) + a ribonucleoside 5'-triphosphate = RNA(n+1) + diphosphate</text>
        <dbReference type="Rhea" id="RHEA:21248"/>
        <dbReference type="Rhea" id="RHEA-COMP:14527"/>
        <dbReference type="Rhea" id="RHEA-COMP:17342"/>
        <dbReference type="ChEBI" id="CHEBI:33019"/>
        <dbReference type="ChEBI" id="CHEBI:61557"/>
        <dbReference type="ChEBI" id="CHEBI:140395"/>
        <dbReference type="EC" id="2.7.7.6"/>
    </reaction>
</comment>
<comment type="subunit">
    <text evidence="1">Homodimer. The RNAP catalytic core consists of 2 alpha, 1 beta, 1 beta' and 1 omega subunit. When a sigma factor is associated with the core the holoenzyme is formed, which can initiate transcription.</text>
</comment>
<comment type="domain">
    <text evidence="1">The N-terminal domain is essential for RNAP assembly and basal transcription, whereas the C-terminal domain is involved in interaction with transcriptional regulators and with upstream promoter elements.</text>
</comment>
<comment type="similarity">
    <text evidence="1">Belongs to the RNA polymerase alpha chain family.</text>
</comment>
<accession>A4SUY6</accession>
<organism>
    <name type="scientific">Polynucleobacter asymbioticus (strain DSM 18221 / CIP 109841 / QLW-P1DMWA-1)</name>
    <name type="common">Polynucleobacter necessarius subsp. asymbioticus</name>
    <dbReference type="NCBI Taxonomy" id="312153"/>
    <lineage>
        <taxon>Bacteria</taxon>
        <taxon>Pseudomonadati</taxon>
        <taxon>Pseudomonadota</taxon>
        <taxon>Betaproteobacteria</taxon>
        <taxon>Burkholderiales</taxon>
        <taxon>Burkholderiaceae</taxon>
        <taxon>Polynucleobacter</taxon>
    </lineage>
</organism>
<evidence type="ECO:0000255" key="1">
    <source>
        <dbReference type="HAMAP-Rule" id="MF_00059"/>
    </source>
</evidence>
<keyword id="KW-0240">DNA-directed RNA polymerase</keyword>
<keyword id="KW-0548">Nucleotidyltransferase</keyword>
<keyword id="KW-1185">Reference proteome</keyword>
<keyword id="KW-0804">Transcription</keyword>
<keyword id="KW-0808">Transferase</keyword>
<feature type="chain" id="PRO_1000075011" description="DNA-directed RNA polymerase subunit alpha">
    <location>
        <begin position="1"/>
        <end position="326"/>
    </location>
</feature>
<feature type="region of interest" description="Alpha N-terminal domain (alpha-NTD)" evidence="1">
    <location>
        <begin position="1"/>
        <end position="231"/>
    </location>
</feature>
<feature type="region of interest" description="Alpha C-terminal domain (alpha-CTD)" evidence="1">
    <location>
        <begin position="247"/>
        <end position="326"/>
    </location>
</feature>
<reference key="1">
    <citation type="journal article" date="2012" name="Stand. Genomic Sci.">
        <title>Complete genome sequence of Polynucleobacter necessarius subsp. asymbioticus type strain (QLW-P1DMWA-1(T)).</title>
        <authorList>
            <person name="Meincke L."/>
            <person name="Copeland A."/>
            <person name="Lapidus A."/>
            <person name="Lucas S."/>
            <person name="Berry K.W."/>
            <person name="Del Rio T.G."/>
            <person name="Hammon N."/>
            <person name="Dalin E."/>
            <person name="Tice H."/>
            <person name="Pitluck S."/>
            <person name="Richardson P."/>
            <person name="Bruce D."/>
            <person name="Goodwin L."/>
            <person name="Han C."/>
            <person name="Tapia R."/>
            <person name="Detter J.C."/>
            <person name="Schmutz J."/>
            <person name="Brettin T."/>
            <person name="Larimer F."/>
            <person name="Land M."/>
            <person name="Hauser L."/>
            <person name="Kyrpides N.C."/>
            <person name="Ivanova N."/>
            <person name="Goker M."/>
            <person name="Woyke T."/>
            <person name="Wu Q.L."/>
            <person name="Pockl M."/>
            <person name="Hahn M.W."/>
            <person name="Klenk H.P."/>
        </authorList>
    </citation>
    <scope>NUCLEOTIDE SEQUENCE [LARGE SCALE GENOMIC DNA]</scope>
    <source>
        <strain>DSM 18221 / CIP 109841 / QLW-P1DMWA-1</strain>
    </source>
</reference>
<protein>
    <recommendedName>
        <fullName evidence="1">DNA-directed RNA polymerase subunit alpha</fullName>
        <shortName evidence="1">RNAP subunit alpha</shortName>
        <ecNumber evidence="1">2.7.7.6</ecNumber>
    </recommendedName>
    <alternativeName>
        <fullName evidence="1">RNA polymerase subunit alpha</fullName>
    </alternativeName>
    <alternativeName>
        <fullName evidence="1">Transcriptase subunit alpha</fullName>
    </alternativeName>
</protein>
<name>RPOA_POLAQ</name>
<dbReference type="EC" id="2.7.7.6" evidence="1"/>
<dbReference type="EMBL" id="CP000655">
    <property type="protein sequence ID" value="ABP33300.1"/>
    <property type="molecule type" value="Genomic_DNA"/>
</dbReference>
<dbReference type="RefSeq" id="WP_011901925.1">
    <property type="nucleotide sequence ID" value="NC_009379.1"/>
</dbReference>
<dbReference type="SMR" id="A4SUY6"/>
<dbReference type="GeneID" id="31480425"/>
<dbReference type="KEGG" id="pnu:Pnuc_0078"/>
<dbReference type="eggNOG" id="COG0202">
    <property type="taxonomic scope" value="Bacteria"/>
</dbReference>
<dbReference type="HOGENOM" id="CLU_053084_0_0_4"/>
<dbReference type="Proteomes" id="UP000000231">
    <property type="component" value="Chromosome"/>
</dbReference>
<dbReference type="GO" id="GO:0005737">
    <property type="term" value="C:cytoplasm"/>
    <property type="evidence" value="ECO:0007669"/>
    <property type="project" value="UniProtKB-ARBA"/>
</dbReference>
<dbReference type="GO" id="GO:0000428">
    <property type="term" value="C:DNA-directed RNA polymerase complex"/>
    <property type="evidence" value="ECO:0007669"/>
    <property type="project" value="UniProtKB-KW"/>
</dbReference>
<dbReference type="GO" id="GO:0003677">
    <property type="term" value="F:DNA binding"/>
    <property type="evidence" value="ECO:0007669"/>
    <property type="project" value="UniProtKB-UniRule"/>
</dbReference>
<dbReference type="GO" id="GO:0003899">
    <property type="term" value="F:DNA-directed RNA polymerase activity"/>
    <property type="evidence" value="ECO:0007669"/>
    <property type="project" value="UniProtKB-UniRule"/>
</dbReference>
<dbReference type="GO" id="GO:0046983">
    <property type="term" value="F:protein dimerization activity"/>
    <property type="evidence" value="ECO:0007669"/>
    <property type="project" value="InterPro"/>
</dbReference>
<dbReference type="GO" id="GO:0006351">
    <property type="term" value="P:DNA-templated transcription"/>
    <property type="evidence" value="ECO:0007669"/>
    <property type="project" value="UniProtKB-UniRule"/>
</dbReference>
<dbReference type="CDD" id="cd06928">
    <property type="entry name" value="RNAP_alpha_NTD"/>
    <property type="match status" value="1"/>
</dbReference>
<dbReference type="FunFam" id="1.10.150.20:FF:000001">
    <property type="entry name" value="DNA-directed RNA polymerase subunit alpha"/>
    <property type="match status" value="1"/>
</dbReference>
<dbReference type="FunFam" id="2.170.120.12:FF:000001">
    <property type="entry name" value="DNA-directed RNA polymerase subunit alpha"/>
    <property type="match status" value="1"/>
</dbReference>
<dbReference type="Gene3D" id="1.10.150.20">
    <property type="entry name" value="5' to 3' exonuclease, C-terminal subdomain"/>
    <property type="match status" value="1"/>
</dbReference>
<dbReference type="Gene3D" id="2.170.120.12">
    <property type="entry name" value="DNA-directed RNA polymerase, insert domain"/>
    <property type="match status" value="1"/>
</dbReference>
<dbReference type="Gene3D" id="3.30.1360.10">
    <property type="entry name" value="RNA polymerase, RBP11-like subunit"/>
    <property type="match status" value="1"/>
</dbReference>
<dbReference type="HAMAP" id="MF_00059">
    <property type="entry name" value="RNApol_bact_RpoA"/>
    <property type="match status" value="1"/>
</dbReference>
<dbReference type="InterPro" id="IPR011262">
    <property type="entry name" value="DNA-dir_RNA_pol_insert"/>
</dbReference>
<dbReference type="InterPro" id="IPR011263">
    <property type="entry name" value="DNA-dir_RNA_pol_RpoA/D/Rpb3"/>
</dbReference>
<dbReference type="InterPro" id="IPR011773">
    <property type="entry name" value="DNA-dir_RpoA"/>
</dbReference>
<dbReference type="InterPro" id="IPR036603">
    <property type="entry name" value="RBP11-like"/>
</dbReference>
<dbReference type="InterPro" id="IPR011260">
    <property type="entry name" value="RNAP_asu_C"/>
</dbReference>
<dbReference type="InterPro" id="IPR036643">
    <property type="entry name" value="RNApol_insert_sf"/>
</dbReference>
<dbReference type="NCBIfam" id="NF003513">
    <property type="entry name" value="PRK05182.1-2"/>
    <property type="match status" value="1"/>
</dbReference>
<dbReference type="NCBIfam" id="NF003519">
    <property type="entry name" value="PRK05182.2-5"/>
    <property type="match status" value="1"/>
</dbReference>
<dbReference type="NCBIfam" id="TIGR02027">
    <property type="entry name" value="rpoA"/>
    <property type="match status" value="1"/>
</dbReference>
<dbReference type="Pfam" id="PF01000">
    <property type="entry name" value="RNA_pol_A_bac"/>
    <property type="match status" value="1"/>
</dbReference>
<dbReference type="Pfam" id="PF03118">
    <property type="entry name" value="RNA_pol_A_CTD"/>
    <property type="match status" value="1"/>
</dbReference>
<dbReference type="Pfam" id="PF01193">
    <property type="entry name" value="RNA_pol_L"/>
    <property type="match status" value="1"/>
</dbReference>
<dbReference type="SMART" id="SM00662">
    <property type="entry name" value="RPOLD"/>
    <property type="match status" value="1"/>
</dbReference>
<dbReference type="SUPFAM" id="SSF47789">
    <property type="entry name" value="C-terminal domain of RNA polymerase alpha subunit"/>
    <property type="match status" value="1"/>
</dbReference>
<dbReference type="SUPFAM" id="SSF56553">
    <property type="entry name" value="Insert subdomain of RNA polymerase alpha subunit"/>
    <property type="match status" value="1"/>
</dbReference>
<dbReference type="SUPFAM" id="SSF55257">
    <property type="entry name" value="RBP11-like subunits of RNA polymerase"/>
    <property type="match status" value="1"/>
</dbReference>
<gene>
    <name evidence="1" type="primary">rpoA</name>
    <name type="ordered locus">Pnuc_0078</name>
</gene>
<sequence length="326" mass="35780">MQTNLLKPKIISVEALTANQAKVVMEPFERGYGHTLGNALRRVLLSSMVGYAPTEVAIAGVVHEYSTLDGVQEDVVNLLLNLKGIVFKLQSRDEVTINLRKEGPGVVTAKDIDLPHDVEIMNPDHVIAHLSAGGKLDMQIKVEKGRGYVPGNVRQYNDETTKIIGRIVLDASFSPVSRVSYAVESARVEQRTDLDRLVMTIETNGVLSPEEAIRQAASILVDQLVVFAALESSEVSGDLAPSRSSMVDPMLMRPVDDLELTVRSANCLKAENIYYIGDLIQRTENELLKTPNLGRKSLNEIKDVLAARGLSLGMKLESWPPANLEK</sequence>